<comment type="function">
    <text evidence="1">RNaseP catalyzes the removal of the 5'-leader sequence from pre-tRNA to produce the mature 5'-terminus. It can also cleave other RNA substrates such as 4.5S RNA. The protein component plays an auxiliary but essential role in vivo by binding to the 5'-leader sequence and broadening the substrate specificity of the ribozyme.</text>
</comment>
<comment type="catalytic activity">
    <reaction evidence="1">
        <text>Endonucleolytic cleavage of RNA, removing 5'-extranucleotides from tRNA precursor.</text>
        <dbReference type="EC" id="3.1.26.5"/>
    </reaction>
</comment>
<comment type="subunit">
    <text evidence="1">Consists of a catalytic RNA component (M1 or rnpB) and a protein subunit.</text>
</comment>
<comment type="similarity">
    <text evidence="1">Belongs to the RnpA family.</text>
</comment>
<gene>
    <name evidence="1" type="primary">rnpA</name>
    <name type="ordered locus">LACR_0129</name>
</gene>
<protein>
    <recommendedName>
        <fullName evidence="1">Ribonuclease P protein component</fullName>
        <shortName evidence="1">RNase P protein</shortName>
        <shortName evidence="1">RNaseP protein</shortName>
        <ecNumber evidence="1">3.1.26.5</ecNumber>
    </recommendedName>
    <alternativeName>
        <fullName evidence="1">Protein C5</fullName>
    </alternativeName>
</protein>
<organism>
    <name type="scientific">Lactococcus lactis subsp. cremoris (strain SK11)</name>
    <dbReference type="NCBI Taxonomy" id="272622"/>
    <lineage>
        <taxon>Bacteria</taxon>
        <taxon>Bacillati</taxon>
        <taxon>Bacillota</taxon>
        <taxon>Bacilli</taxon>
        <taxon>Lactobacillales</taxon>
        <taxon>Streptococcaceae</taxon>
        <taxon>Lactococcus</taxon>
        <taxon>Lactococcus cremoris subsp. cremoris</taxon>
    </lineage>
</organism>
<evidence type="ECO:0000255" key="1">
    <source>
        <dbReference type="HAMAP-Rule" id="MF_00227"/>
    </source>
</evidence>
<feature type="chain" id="PRO_1000021420" description="Ribonuclease P protein component">
    <location>
        <begin position="1"/>
        <end position="117"/>
    </location>
</feature>
<proteinExistence type="inferred from homology"/>
<dbReference type="EC" id="3.1.26.5" evidence="1"/>
<dbReference type="EMBL" id="CP000425">
    <property type="protein sequence ID" value="ABJ71750.1"/>
    <property type="molecule type" value="Genomic_DNA"/>
</dbReference>
<dbReference type="RefSeq" id="WP_011675185.1">
    <property type="nucleotide sequence ID" value="NC_008527.1"/>
</dbReference>
<dbReference type="SMR" id="Q032X2"/>
<dbReference type="GeneID" id="61108442"/>
<dbReference type="KEGG" id="llc:LACR_0129"/>
<dbReference type="HOGENOM" id="CLU_117179_9_1_9"/>
<dbReference type="Proteomes" id="UP000000240">
    <property type="component" value="Chromosome"/>
</dbReference>
<dbReference type="GO" id="GO:0030677">
    <property type="term" value="C:ribonuclease P complex"/>
    <property type="evidence" value="ECO:0007669"/>
    <property type="project" value="TreeGrafter"/>
</dbReference>
<dbReference type="GO" id="GO:0042781">
    <property type="term" value="F:3'-tRNA processing endoribonuclease activity"/>
    <property type="evidence" value="ECO:0007669"/>
    <property type="project" value="TreeGrafter"/>
</dbReference>
<dbReference type="GO" id="GO:0004526">
    <property type="term" value="F:ribonuclease P activity"/>
    <property type="evidence" value="ECO:0007669"/>
    <property type="project" value="UniProtKB-UniRule"/>
</dbReference>
<dbReference type="GO" id="GO:0000049">
    <property type="term" value="F:tRNA binding"/>
    <property type="evidence" value="ECO:0007669"/>
    <property type="project" value="UniProtKB-UniRule"/>
</dbReference>
<dbReference type="GO" id="GO:0001682">
    <property type="term" value="P:tRNA 5'-leader removal"/>
    <property type="evidence" value="ECO:0007669"/>
    <property type="project" value="UniProtKB-UniRule"/>
</dbReference>
<dbReference type="FunFam" id="3.30.230.10:FF:000021">
    <property type="entry name" value="Ribonuclease P protein component"/>
    <property type="match status" value="1"/>
</dbReference>
<dbReference type="Gene3D" id="3.30.230.10">
    <property type="match status" value="1"/>
</dbReference>
<dbReference type="HAMAP" id="MF_00227">
    <property type="entry name" value="RNase_P"/>
    <property type="match status" value="1"/>
</dbReference>
<dbReference type="InterPro" id="IPR020568">
    <property type="entry name" value="Ribosomal_Su5_D2-typ_SF"/>
</dbReference>
<dbReference type="InterPro" id="IPR014721">
    <property type="entry name" value="Ribsml_uS5_D2-typ_fold_subgr"/>
</dbReference>
<dbReference type="InterPro" id="IPR000100">
    <property type="entry name" value="RNase_P"/>
</dbReference>
<dbReference type="InterPro" id="IPR020539">
    <property type="entry name" value="RNase_P_CS"/>
</dbReference>
<dbReference type="NCBIfam" id="TIGR00188">
    <property type="entry name" value="rnpA"/>
    <property type="match status" value="1"/>
</dbReference>
<dbReference type="PANTHER" id="PTHR33992">
    <property type="entry name" value="RIBONUCLEASE P PROTEIN COMPONENT"/>
    <property type="match status" value="1"/>
</dbReference>
<dbReference type="PANTHER" id="PTHR33992:SF1">
    <property type="entry name" value="RIBONUCLEASE P PROTEIN COMPONENT"/>
    <property type="match status" value="1"/>
</dbReference>
<dbReference type="Pfam" id="PF00825">
    <property type="entry name" value="Ribonuclease_P"/>
    <property type="match status" value="1"/>
</dbReference>
<dbReference type="SUPFAM" id="SSF54211">
    <property type="entry name" value="Ribosomal protein S5 domain 2-like"/>
    <property type="match status" value="1"/>
</dbReference>
<dbReference type="PROSITE" id="PS00648">
    <property type="entry name" value="RIBONUCLEASE_P"/>
    <property type="match status" value="1"/>
</dbReference>
<name>RNPA_LACLS</name>
<sequence>MAIKKTYRVKRSKDFDQIFSAKHSFANKRFVVYKLNTNQPHFRVGLSVSKKLGHAVLRNRIKRLLRHAVAEFKPYLVDEDFVIIARSGVETLSFEEVKKNLRHVLKLSKIYVDGEND</sequence>
<keyword id="KW-0255">Endonuclease</keyword>
<keyword id="KW-0378">Hydrolase</keyword>
<keyword id="KW-0540">Nuclease</keyword>
<keyword id="KW-0694">RNA-binding</keyword>
<keyword id="KW-0819">tRNA processing</keyword>
<reference key="1">
    <citation type="journal article" date="2006" name="Proc. Natl. Acad. Sci. U.S.A.">
        <title>Comparative genomics of the lactic acid bacteria.</title>
        <authorList>
            <person name="Makarova K.S."/>
            <person name="Slesarev A."/>
            <person name="Wolf Y.I."/>
            <person name="Sorokin A."/>
            <person name="Mirkin B."/>
            <person name="Koonin E.V."/>
            <person name="Pavlov A."/>
            <person name="Pavlova N."/>
            <person name="Karamychev V."/>
            <person name="Polouchine N."/>
            <person name="Shakhova V."/>
            <person name="Grigoriev I."/>
            <person name="Lou Y."/>
            <person name="Rohksar D."/>
            <person name="Lucas S."/>
            <person name="Huang K."/>
            <person name="Goodstein D.M."/>
            <person name="Hawkins T."/>
            <person name="Plengvidhya V."/>
            <person name="Welker D."/>
            <person name="Hughes J."/>
            <person name="Goh Y."/>
            <person name="Benson A."/>
            <person name="Baldwin K."/>
            <person name="Lee J.-H."/>
            <person name="Diaz-Muniz I."/>
            <person name="Dosti B."/>
            <person name="Smeianov V."/>
            <person name="Wechter W."/>
            <person name="Barabote R."/>
            <person name="Lorca G."/>
            <person name="Altermann E."/>
            <person name="Barrangou R."/>
            <person name="Ganesan B."/>
            <person name="Xie Y."/>
            <person name="Rawsthorne H."/>
            <person name="Tamir D."/>
            <person name="Parker C."/>
            <person name="Breidt F."/>
            <person name="Broadbent J.R."/>
            <person name="Hutkins R."/>
            <person name="O'Sullivan D."/>
            <person name="Steele J."/>
            <person name="Unlu G."/>
            <person name="Saier M.H. Jr."/>
            <person name="Klaenhammer T."/>
            <person name="Richardson P."/>
            <person name="Kozyavkin S."/>
            <person name="Weimer B.C."/>
            <person name="Mills D.A."/>
        </authorList>
    </citation>
    <scope>NUCLEOTIDE SEQUENCE [LARGE SCALE GENOMIC DNA]</scope>
    <source>
        <strain>SK11</strain>
    </source>
</reference>
<accession>Q032X2</accession>